<keyword id="KW-0238">DNA-binding</keyword>
<keyword id="KW-0539">Nucleus</keyword>
<keyword id="KW-0597">Phosphoprotein</keyword>
<keyword id="KW-1185">Reference proteome</keyword>
<keyword id="KW-0678">Repressor</keyword>
<keyword id="KW-0804">Transcription</keyword>
<keyword id="KW-0805">Transcription regulation</keyword>
<proteinExistence type="evidence at protein level"/>
<sequence length="197" mass="22196">MKTKNRPPRRRTPMQDAEATPGEQTPDRSQSGSGASEVTKGLRSRTARASGTRAEVSRRRQGSSSRRENSVQRRLESNERERQRMHKLNNAFQALREVIPHVRADKKLSKIETLTLAKNYIKSLTATILTMSSSRLPGLEAPGPAPGPKLYQHYHHQQQQQQQQQQVAGAVLGVTEDQPQGHLQRYSTQIHSFREGS</sequence>
<organism>
    <name type="scientific">Rattus norvegicus</name>
    <name type="common">Rat</name>
    <dbReference type="NCBI Taxonomy" id="10116"/>
    <lineage>
        <taxon>Eukaryota</taxon>
        <taxon>Metazoa</taxon>
        <taxon>Chordata</taxon>
        <taxon>Craniata</taxon>
        <taxon>Vertebrata</taxon>
        <taxon>Euteleostomi</taxon>
        <taxon>Mammalia</taxon>
        <taxon>Eutheria</taxon>
        <taxon>Euarchontoglires</taxon>
        <taxon>Glires</taxon>
        <taxon>Rodentia</taxon>
        <taxon>Myomorpha</taxon>
        <taxon>Muroidea</taxon>
        <taxon>Muridae</taxon>
        <taxon>Murinae</taxon>
        <taxon>Rattus</taxon>
    </lineage>
</organism>
<comment type="function">
    <text evidence="2">Plays a role in controlling the transcriptional activity of MyoD, ensuring that expanding myoblast populations remain undifferentiated. Repression may occur through muscle-specific E-box occupancy by homodimers. May also negatively regulate bHLH-mediated transcription through an N-terminal repressor domain. Serves as a key regulator of acinar cell function, stability, and identity. Also required for normal organelle localization in exocrine cells and for mitochondrial calcium ion transport. May function as a unique regulator of gene expression in several different embryonic and postnatal cell lineages. Binds to the E-box consensus sequence 5'-CANNTG-3' (By similarity).</text>
</comment>
<comment type="subunit">
    <text>Forms homodimers or heterodimers with TCF3 gene products E12 and E47. These dimers bind to the E-box site, however, heterodimer with MYOD1 does not bind target DNA.</text>
</comment>
<comment type="subcellular location">
    <subcellularLocation>
        <location evidence="6">Nucleus</location>
    </subcellularLocation>
</comment>
<comment type="tissue specificity">
    <text evidence="5">Expressed in liver, spleen and olfactory epithelium. Weaker expression is seen in skeletal muscle, cardiac muscle, eye and brain tissue.</text>
</comment>
<comment type="domain">
    <text evidence="1">Lacks a classic transcription activation domain and instead possesses an N-terminal region capable of inhibiting heterologous activators.</text>
</comment>
<accession>P70562</accession>
<reference key="1">
    <citation type="journal article" date="1997" name="Dev. Biol.">
        <title>Mist1: a novel basic helix-loop-helix transcription factor exhibits a developmentally regulated expression pattern.</title>
        <authorList>
            <person name="Lemercier C."/>
            <person name="To R.Q."/>
            <person name="Swanson B.J."/>
            <person name="Lyons G.E."/>
            <person name="Konieczny S.F."/>
        </authorList>
    </citation>
    <scope>NUCLEOTIDE SEQUENCE [MRNA]</scope>
    <scope>TISSUE SPECIFICITY</scope>
    <scope>CHARACTERIZATION</scope>
    <source>
        <strain>Sprague-Dawley</strain>
        <tissue>Olfactory epithelium</tissue>
    </source>
</reference>
<reference key="2">
    <citation type="journal article" date="2000" name="Gene">
        <title>The rat Mist1 gene: structure and promoter characterization.</title>
        <authorList>
            <person name="Lemercier C."/>
            <person name="Brown A."/>
            <person name="Mamani M."/>
            <person name="Ripoche J."/>
            <person name="Reiffers J."/>
        </authorList>
    </citation>
    <scope>NUCLEOTIDE SEQUENCE [GENOMIC DNA]</scope>
    <source>
        <strain>Sprague-Dawley</strain>
    </source>
</reference>
<reference key="3">
    <citation type="journal article" date="2004" name="Genome Res.">
        <title>The status, quality, and expansion of the NIH full-length cDNA project: the Mammalian Gene Collection (MGC).</title>
        <authorList>
            <consortium name="The MGC Project Team"/>
        </authorList>
    </citation>
    <scope>NUCLEOTIDE SEQUENCE [LARGE SCALE MRNA]</scope>
    <source>
        <tissue>Prostate</tissue>
    </source>
</reference>
<reference key="4">
    <citation type="journal article" date="2012" name="Nat. Commun.">
        <title>Quantitative maps of protein phosphorylation sites across 14 different rat organs and tissues.</title>
        <authorList>
            <person name="Lundby A."/>
            <person name="Secher A."/>
            <person name="Lage K."/>
            <person name="Nordsborg N.B."/>
            <person name="Dmytriyev A."/>
            <person name="Lundby C."/>
            <person name="Olsen J.V."/>
        </authorList>
    </citation>
    <scope>PHOSPHORYLATION [LARGE SCALE ANALYSIS] AT THR-25</scope>
    <scope>IDENTIFICATION BY MASS SPECTROMETRY [LARGE SCALE ANALYSIS]</scope>
</reference>
<feature type="chain" id="PRO_0000127152" description="Class A basic helix-loop-helix protein 15">
    <location>
        <begin position="1"/>
        <end position="197"/>
    </location>
</feature>
<feature type="domain" description="bHLH" evidence="3">
    <location>
        <begin position="72"/>
        <end position="124"/>
    </location>
</feature>
<feature type="region of interest" description="Disordered" evidence="4">
    <location>
        <begin position="1"/>
        <end position="82"/>
    </location>
</feature>
<feature type="region of interest" description="Disordered" evidence="4">
    <location>
        <begin position="175"/>
        <end position="197"/>
    </location>
</feature>
<feature type="compositionally biased region" description="Basic residues" evidence="4">
    <location>
        <begin position="1"/>
        <end position="12"/>
    </location>
</feature>
<feature type="compositionally biased region" description="Polar residues" evidence="4">
    <location>
        <begin position="27"/>
        <end position="36"/>
    </location>
</feature>
<feature type="compositionally biased region" description="Basic and acidic residues" evidence="4">
    <location>
        <begin position="65"/>
        <end position="82"/>
    </location>
</feature>
<feature type="modified residue" description="Phosphothreonine" evidence="2">
    <location>
        <position position="12"/>
    </location>
</feature>
<feature type="modified residue" description="Phosphothreonine" evidence="7">
    <location>
        <position position="25"/>
    </location>
</feature>
<dbReference type="EMBL" id="U58279">
    <property type="protein sequence ID" value="AAC53111.1"/>
    <property type="molecule type" value="mRNA"/>
</dbReference>
<dbReference type="EMBL" id="AF049874">
    <property type="protein sequence ID" value="AAF17707.1"/>
    <property type="molecule type" value="Genomic_DNA"/>
</dbReference>
<dbReference type="EMBL" id="BC061868">
    <property type="protein sequence ID" value="AAH61868.1"/>
    <property type="molecule type" value="mRNA"/>
</dbReference>
<dbReference type="RefSeq" id="NP_036995.1">
    <property type="nucleotide sequence ID" value="NM_012863.2"/>
</dbReference>
<dbReference type="SMR" id="P70562"/>
<dbReference type="BioGRID" id="247373">
    <property type="interactions" value="1"/>
</dbReference>
<dbReference type="FunCoup" id="P70562">
    <property type="interactions" value="84"/>
</dbReference>
<dbReference type="STRING" id="10116.ENSRNOP00000035219"/>
<dbReference type="GlyGen" id="P70562">
    <property type="glycosylation" value="1 site"/>
</dbReference>
<dbReference type="iPTMnet" id="P70562"/>
<dbReference type="PhosphoSitePlus" id="P70562"/>
<dbReference type="PaxDb" id="10116-ENSRNOP00000035219"/>
<dbReference type="GeneID" id="25334"/>
<dbReference type="KEGG" id="rno:25334"/>
<dbReference type="AGR" id="RGD:3091"/>
<dbReference type="CTD" id="168620"/>
<dbReference type="RGD" id="3091">
    <property type="gene designation" value="Bhlha15"/>
</dbReference>
<dbReference type="VEuPathDB" id="HostDB:ENSRNOG00000025164"/>
<dbReference type="eggNOG" id="KOG3898">
    <property type="taxonomic scope" value="Eukaryota"/>
</dbReference>
<dbReference type="HOGENOM" id="CLU_097977_2_0_1"/>
<dbReference type="InParanoid" id="P70562"/>
<dbReference type="OrthoDB" id="82591at9989"/>
<dbReference type="PhylomeDB" id="P70562"/>
<dbReference type="TreeFam" id="TF315153"/>
<dbReference type="PRO" id="PR:P70562"/>
<dbReference type="Proteomes" id="UP000002494">
    <property type="component" value="Chromosome 12"/>
</dbReference>
<dbReference type="Bgee" id="ENSRNOG00000025164">
    <property type="expression patterns" value="Expressed in pancreas and 10 other cell types or tissues"/>
</dbReference>
<dbReference type="GO" id="GO:0005634">
    <property type="term" value="C:nucleus"/>
    <property type="evidence" value="ECO:0000314"/>
    <property type="project" value="MGI"/>
</dbReference>
<dbReference type="GO" id="GO:0003677">
    <property type="term" value="F:DNA binding"/>
    <property type="evidence" value="ECO:0000314"/>
    <property type="project" value="MGI"/>
</dbReference>
<dbReference type="GO" id="GO:0001228">
    <property type="term" value="F:DNA-binding transcription activator activity, RNA polymerase II-specific"/>
    <property type="evidence" value="ECO:0000266"/>
    <property type="project" value="RGD"/>
</dbReference>
<dbReference type="GO" id="GO:0000981">
    <property type="term" value="F:DNA-binding transcription factor activity, RNA polymerase II-specific"/>
    <property type="evidence" value="ECO:0000318"/>
    <property type="project" value="GO_Central"/>
</dbReference>
<dbReference type="GO" id="GO:0070888">
    <property type="term" value="F:E-box binding"/>
    <property type="evidence" value="ECO:0000318"/>
    <property type="project" value="GO_Central"/>
</dbReference>
<dbReference type="GO" id="GO:0042802">
    <property type="term" value="F:identical protein binding"/>
    <property type="evidence" value="ECO:0000266"/>
    <property type="project" value="RGD"/>
</dbReference>
<dbReference type="GO" id="GO:0046983">
    <property type="term" value="F:protein dimerization activity"/>
    <property type="evidence" value="ECO:0007669"/>
    <property type="project" value="InterPro"/>
</dbReference>
<dbReference type="GO" id="GO:0000977">
    <property type="term" value="F:RNA polymerase II transcription regulatory region sequence-specific DNA binding"/>
    <property type="evidence" value="ECO:0000266"/>
    <property type="project" value="RGD"/>
</dbReference>
<dbReference type="GO" id="GO:1990837">
    <property type="term" value="F:sequence-specific double-stranded DNA binding"/>
    <property type="evidence" value="ECO:0000266"/>
    <property type="project" value="RGD"/>
</dbReference>
<dbReference type="GO" id="GO:0061564">
    <property type="term" value="P:axon development"/>
    <property type="evidence" value="ECO:0000318"/>
    <property type="project" value="GO_Central"/>
</dbReference>
<dbReference type="GO" id="GO:0019722">
    <property type="term" value="P:calcium-mediated signaling"/>
    <property type="evidence" value="ECO:0000266"/>
    <property type="project" value="RGD"/>
</dbReference>
<dbReference type="GO" id="GO:0030154">
    <property type="term" value="P:cell differentiation"/>
    <property type="evidence" value="ECO:0000266"/>
    <property type="project" value="RGD"/>
</dbReference>
<dbReference type="GO" id="GO:0044331">
    <property type="term" value="P:cell-cell adhesion mediated by cadherin"/>
    <property type="evidence" value="ECO:0000266"/>
    <property type="project" value="RGD"/>
</dbReference>
<dbReference type="GO" id="GO:0045216">
    <property type="term" value="P:cell-cell junction organization"/>
    <property type="evidence" value="ECO:0000266"/>
    <property type="project" value="RGD"/>
</dbReference>
<dbReference type="GO" id="GO:0007267">
    <property type="term" value="P:cell-cell signaling"/>
    <property type="evidence" value="ECO:0000266"/>
    <property type="project" value="RGD"/>
</dbReference>
<dbReference type="GO" id="GO:0042149">
    <property type="term" value="P:cellular response to glucose starvation"/>
    <property type="evidence" value="ECO:0000250"/>
    <property type="project" value="UniProtKB"/>
</dbReference>
<dbReference type="GO" id="GO:0030968">
    <property type="term" value="P:endoplasmic reticulum unfolded protein response"/>
    <property type="evidence" value="ECO:0000250"/>
    <property type="project" value="UniProtKB"/>
</dbReference>
<dbReference type="GO" id="GO:0051649">
    <property type="term" value="P:establishment of localization in cell"/>
    <property type="evidence" value="ECO:0000266"/>
    <property type="project" value="RGD"/>
</dbReference>
<dbReference type="GO" id="GO:0007186">
    <property type="term" value="P:G protein-coupled receptor signaling pathway"/>
    <property type="evidence" value="ECO:0000266"/>
    <property type="project" value="RGD"/>
</dbReference>
<dbReference type="GO" id="GO:0002071">
    <property type="term" value="P:glandular epithelial cell maturation"/>
    <property type="evidence" value="ECO:0000266"/>
    <property type="project" value="RGD"/>
</dbReference>
<dbReference type="GO" id="GO:0042593">
    <property type="term" value="P:glucose homeostasis"/>
    <property type="evidence" value="ECO:0000266"/>
    <property type="project" value="RGD"/>
</dbReference>
<dbReference type="GO" id="GO:0007030">
    <property type="term" value="P:Golgi organization"/>
    <property type="evidence" value="ECO:0000266"/>
    <property type="project" value="RGD"/>
</dbReference>
<dbReference type="GO" id="GO:0048312">
    <property type="term" value="P:intracellular distribution of mitochondria"/>
    <property type="evidence" value="ECO:0000266"/>
    <property type="project" value="RGD"/>
</dbReference>
<dbReference type="GO" id="GO:0051674">
    <property type="term" value="P:localization of cell"/>
    <property type="evidence" value="ECO:0000266"/>
    <property type="project" value="RGD"/>
</dbReference>
<dbReference type="GO" id="GO:0006851">
    <property type="term" value="P:mitochondrial calcium ion transmembrane transport"/>
    <property type="evidence" value="ECO:0000266"/>
    <property type="project" value="RGD"/>
</dbReference>
<dbReference type="GO" id="GO:0010832">
    <property type="term" value="P:negative regulation of myotube differentiation"/>
    <property type="evidence" value="ECO:0000250"/>
    <property type="project" value="UniProtKB"/>
</dbReference>
<dbReference type="GO" id="GO:0045944">
    <property type="term" value="P:positive regulation of transcription by RNA polymerase II"/>
    <property type="evidence" value="ECO:0000266"/>
    <property type="project" value="RGD"/>
</dbReference>
<dbReference type="GO" id="GO:0007423">
    <property type="term" value="P:sensory organ development"/>
    <property type="evidence" value="ECO:0000318"/>
    <property type="project" value="GO_Central"/>
</dbReference>
<dbReference type="GO" id="GO:0072560">
    <property type="term" value="P:type B pancreatic cell maturation"/>
    <property type="evidence" value="ECO:0000266"/>
    <property type="project" value="RGD"/>
</dbReference>
<dbReference type="CDD" id="cd19711">
    <property type="entry name" value="bHLH_TS_MIST1"/>
    <property type="match status" value="1"/>
</dbReference>
<dbReference type="FunFam" id="4.10.280.10:FF:000065">
    <property type="entry name" value="class A basic helix-loop-helix protein 15"/>
    <property type="match status" value="1"/>
</dbReference>
<dbReference type="Gene3D" id="4.10.280.10">
    <property type="entry name" value="Helix-loop-helix DNA-binding domain"/>
    <property type="match status" value="1"/>
</dbReference>
<dbReference type="InterPro" id="IPR011598">
    <property type="entry name" value="bHLH_dom"/>
</dbReference>
<dbReference type="InterPro" id="IPR050359">
    <property type="entry name" value="bHLH_transcription_factors"/>
</dbReference>
<dbReference type="InterPro" id="IPR036638">
    <property type="entry name" value="HLH_DNA-bd_sf"/>
</dbReference>
<dbReference type="PANTHER" id="PTHR19290">
    <property type="entry name" value="BASIC HELIX-LOOP-HELIX PROTEIN NEUROGENIN-RELATED"/>
    <property type="match status" value="1"/>
</dbReference>
<dbReference type="PANTHER" id="PTHR19290:SF160">
    <property type="entry name" value="CLASS A BASIC HELIX-LOOP-HELIX PROTEIN 15"/>
    <property type="match status" value="1"/>
</dbReference>
<dbReference type="Pfam" id="PF00010">
    <property type="entry name" value="HLH"/>
    <property type="match status" value="1"/>
</dbReference>
<dbReference type="SMART" id="SM00353">
    <property type="entry name" value="HLH"/>
    <property type="match status" value="1"/>
</dbReference>
<dbReference type="SUPFAM" id="SSF47459">
    <property type="entry name" value="HLH, helix-loop-helix DNA-binding domain"/>
    <property type="match status" value="1"/>
</dbReference>
<dbReference type="PROSITE" id="PS50888">
    <property type="entry name" value="BHLH"/>
    <property type="match status" value="1"/>
</dbReference>
<gene>
    <name type="primary">Bhlha15</name>
    <name type="synonym">Bhlhb8</name>
    <name type="synonym">Mist1</name>
</gene>
<name>BHA15_RAT</name>
<evidence type="ECO:0000250" key="1"/>
<evidence type="ECO:0000250" key="2">
    <source>
        <dbReference type="UniProtKB" id="Q9QYC3"/>
    </source>
</evidence>
<evidence type="ECO:0000255" key="3">
    <source>
        <dbReference type="PROSITE-ProRule" id="PRU00981"/>
    </source>
</evidence>
<evidence type="ECO:0000256" key="4">
    <source>
        <dbReference type="SAM" id="MobiDB-lite"/>
    </source>
</evidence>
<evidence type="ECO:0000269" key="5">
    <source>
    </source>
</evidence>
<evidence type="ECO:0000305" key="6"/>
<evidence type="ECO:0007744" key="7">
    <source>
    </source>
</evidence>
<protein>
    <recommendedName>
        <fullName>Class A basic helix-loop-helix protein 15</fullName>
        <shortName>bHLHa15</shortName>
    </recommendedName>
    <alternativeName>
        <fullName>Class B basic helix-loop-helix protein 8</fullName>
        <shortName>bHLHb8</shortName>
    </alternativeName>
    <alternativeName>
        <fullName>Muscle, intestine and stomach expression 1</fullName>
        <shortName>MIST-1</shortName>
    </alternativeName>
</protein>